<keyword id="KW-0067">ATP-binding</keyword>
<keyword id="KW-0131">Cell cycle</keyword>
<keyword id="KW-0132">Cell division</keyword>
<keyword id="KW-0137">Centromere</keyword>
<keyword id="KW-0158">Chromosome</keyword>
<keyword id="KW-0963">Cytoplasm</keyword>
<keyword id="KW-0206">Cytoskeleton</keyword>
<keyword id="KW-0903">Direct protein sequencing</keyword>
<keyword id="KW-0243">Dynein</keyword>
<keyword id="KW-0967">Endosome</keyword>
<keyword id="KW-0995">Kinetochore</keyword>
<keyword id="KW-0472">Membrane</keyword>
<keyword id="KW-0493">Microtubule</keyword>
<keyword id="KW-0498">Mitosis</keyword>
<keyword id="KW-0505">Motor protein</keyword>
<keyword id="KW-0547">Nucleotide-binding</keyword>
<keyword id="KW-0597">Phosphoprotein</keyword>
<keyword id="KW-1185">Reference proteome</keyword>
<keyword id="KW-0813">Transport</keyword>
<evidence type="ECO:0000250" key="1"/>
<evidence type="ECO:0000250" key="2">
    <source>
        <dbReference type="UniProtKB" id="Q9Y6G9"/>
    </source>
</evidence>
<evidence type="ECO:0000255" key="3"/>
<evidence type="ECO:0000256" key="4">
    <source>
        <dbReference type="SAM" id="MobiDB-lite"/>
    </source>
</evidence>
<evidence type="ECO:0000305" key="5"/>
<evidence type="ECO:0007744" key="6">
    <source>
    </source>
</evidence>
<evidence type="ECO:0007744" key="7">
    <source>
    </source>
</evidence>
<evidence type="ECO:0007744" key="8">
    <source>
    </source>
</evidence>
<evidence type="ECO:0007744" key="9">
    <source>
    </source>
</evidence>
<evidence type="ECO:0007744" key="10">
    <source>
    </source>
</evidence>
<evidence type="ECO:0007744" key="11">
    <source>
    </source>
</evidence>
<accession>Q8R1Q8</accession>
<protein>
    <recommendedName>
        <fullName>Cytoplasmic dynein 1 light intermediate chain 1</fullName>
    </recommendedName>
    <alternativeName>
        <fullName>Dynein light chain A</fullName>
        <shortName>DLC-A</shortName>
    </alternativeName>
    <alternativeName>
        <fullName>Dynein light intermediate chain 1, cytosolic</fullName>
    </alternativeName>
</protein>
<feature type="chain" id="PRO_0000114667" description="Cytoplasmic dynein 1 light intermediate chain 1">
    <location>
        <begin position="1"/>
        <end position="523"/>
    </location>
</feature>
<feature type="region of interest" description="Disordered" evidence="4">
    <location>
        <begin position="1"/>
        <end position="25"/>
    </location>
</feature>
<feature type="region of interest" description="Disordered" evidence="4">
    <location>
        <begin position="200"/>
        <end position="219"/>
    </location>
</feature>
<feature type="region of interest" description="Disordered" evidence="4">
    <location>
        <begin position="387"/>
        <end position="434"/>
    </location>
</feature>
<feature type="region of interest" description="Disordered" evidence="4">
    <location>
        <begin position="457"/>
        <end position="523"/>
    </location>
</feature>
<feature type="compositionally biased region" description="Low complexity" evidence="4">
    <location>
        <begin position="412"/>
        <end position="421"/>
    </location>
</feature>
<feature type="compositionally biased region" description="Gly residues" evidence="4">
    <location>
        <begin position="458"/>
        <end position="473"/>
    </location>
</feature>
<feature type="compositionally biased region" description="Low complexity" evidence="4">
    <location>
        <begin position="474"/>
        <end position="485"/>
    </location>
</feature>
<feature type="compositionally biased region" description="Low complexity" evidence="4">
    <location>
        <begin position="506"/>
        <end position="523"/>
    </location>
</feature>
<feature type="binding site" evidence="3">
    <location>
        <begin position="74"/>
        <end position="81"/>
    </location>
    <ligand>
        <name>ATP</name>
        <dbReference type="ChEBI" id="CHEBI:30616"/>
    </ligand>
</feature>
<feature type="modified residue" description="Phosphoserine" evidence="6 7 8 10 11">
    <location>
        <position position="207"/>
    </location>
</feature>
<feature type="modified residue" description="Phosphothreonine" evidence="2">
    <location>
        <position position="213"/>
    </location>
</feature>
<feature type="modified residue" description="Phosphoserine" evidence="2">
    <location>
        <position position="398"/>
    </location>
</feature>
<feature type="modified residue" description="Phosphoserine" evidence="7">
    <location>
        <position position="405"/>
    </location>
</feature>
<feature type="modified residue" description="Phosphothreonine" evidence="2">
    <location>
        <position position="408"/>
    </location>
</feature>
<feature type="modified residue" description="Phosphoserine" evidence="2">
    <location>
        <position position="412"/>
    </location>
</feature>
<feature type="modified residue" description="Phosphoserine" evidence="2">
    <location>
        <position position="419"/>
    </location>
</feature>
<feature type="modified residue" description="Phosphoserine" evidence="2">
    <location>
        <position position="421"/>
    </location>
</feature>
<feature type="modified residue" description="Phosphoserine" evidence="2">
    <location>
        <position position="427"/>
    </location>
</feature>
<feature type="modified residue" description="Phosphoserine" evidence="2">
    <location>
        <position position="486"/>
    </location>
</feature>
<feature type="modified residue" description="Phosphoserine" evidence="8 11">
    <location>
        <position position="510"/>
    </location>
</feature>
<feature type="modified residue" description="Phosphothreonine" evidence="11">
    <location>
        <position position="512"/>
    </location>
</feature>
<feature type="modified residue" description="Phosphothreonine" evidence="8 11">
    <location>
        <position position="513"/>
    </location>
</feature>
<feature type="modified residue" description="Phosphothreonine" evidence="8 11">
    <location>
        <position position="515"/>
    </location>
</feature>
<feature type="modified residue" description="Phosphoserine" evidence="8 9 11">
    <location>
        <position position="516"/>
    </location>
</feature>
<name>DC1L1_MOUSE</name>
<comment type="function">
    <text evidence="1 2">Acts as one of several non-catalytic accessory components of the cytoplasmic dynein 1 complex that are thought to be involved in linking dynein to cargos and to adapter proteins that regulate dynein function. Cytoplasmic dynein 1 acts as a motor for the intracellular retrograde motility of vesicles and organelles along microtubules. May play a role in binding dynein to membranous organelles or chromosomes. Probably involved in the microtubule-dependent transport of pericentrin. Is required for progress through the spindle assembly checkpoint. The phosphorylated form appears to be involved in the selective removal of MAD1L1 and MAD1L2 but not BUB1B from kinetochores (By similarity). Forms a functional Rab11/RAB11FIP3/dynein complex onto endosomal membrane that regulates the movement of peripheral sorting endosomes (SE) along microtubule tracks toward the microtubule organizing center/centrosome, generating the endosomal recycling compartment (ERC) (By similarity).</text>
</comment>
<comment type="subunit">
    <text evidence="1 2">Homodimer (By similarity). The cytoplasmic dynein 1 complex consists of two catalytic heavy chains (HCs) and a number of non-catalytic subunits presented by intermediate chains (ICs), light intermediate chains (LICs) and light chains (LCs); the composition seems to vary in respect to the IC, LIC and LC composition. The heavy chain homodimer serves as a scaffold for the probable homodimeric assembly of the respective non-catalytic subunits. The ICs and LICs bind directly to the HC dimer and the LCs assemble on the IC dimer. Self-associates. Interacts with DYNC1H1; DYNC1LI1 and DYNC1LI2 bind mutually exclusive to DYNC1H1. Interacts with PCNT (By similarity). Forms a complex with RAB11FIP3 and RAB11A1; the interaction between DYNC1LI1 and RAB11FIP3 is direct and induces DYNC1LI1 localization onto endosomal membrane; the complex regulates endocytic trafficking (By similarity). Interacts with RUFY3 (By similarity).</text>
</comment>
<comment type="subcellular location">
    <subcellularLocation>
        <location evidence="1">Cytoplasm</location>
    </subcellularLocation>
    <subcellularLocation>
        <location evidence="2">Chromosome</location>
        <location evidence="2">Centromere</location>
        <location evidence="2">Kinetochore</location>
    </subcellularLocation>
    <subcellularLocation>
        <location evidence="2">Cytoplasm</location>
        <location evidence="2">Cytoskeleton</location>
        <location evidence="2">Spindle pole</location>
    </subcellularLocation>
    <subcellularLocation>
        <location evidence="2">Recycling endosome membrane</location>
    </subcellularLocation>
</comment>
<comment type="PTM">
    <text evidence="1">Phosphorylated during mitosis but not in interphase.</text>
</comment>
<comment type="similarity">
    <text evidence="5">Belongs to the dynein light intermediate chain family.</text>
</comment>
<reference key="1">
    <citation type="journal article" date="2004" name="Genome Res.">
        <title>The status, quality, and expansion of the NIH full-length cDNA project: the Mammalian Gene Collection (MGC).</title>
        <authorList>
            <consortium name="The MGC Project Team"/>
        </authorList>
    </citation>
    <scope>NUCLEOTIDE SEQUENCE [LARGE SCALE MRNA]</scope>
    <source>
        <strain>FVB/N</strain>
        <tissue>Kidney</tissue>
    </source>
</reference>
<reference key="2">
    <citation type="submission" date="2009-01" db="UniProtKB">
        <authorList>
            <person name="Lubec G."/>
            <person name="Sunyer B."/>
            <person name="Chen W.-Q."/>
        </authorList>
    </citation>
    <scope>PROTEIN SEQUENCE OF 134-142</scope>
    <scope>IDENTIFICATION BY MASS SPECTROMETRY</scope>
    <source>
        <strain>OF1</strain>
        <tissue>Hippocampus</tissue>
    </source>
</reference>
<reference key="3">
    <citation type="journal article" date="2004" name="Mol. Cell. Proteomics">
        <title>Phosphoproteomic analysis of the developing mouse brain.</title>
        <authorList>
            <person name="Ballif B.A."/>
            <person name="Villen J."/>
            <person name="Beausoleil S.A."/>
            <person name="Schwartz D."/>
            <person name="Gygi S.P."/>
        </authorList>
    </citation>
    <scope>PHOSPHORYLATION [LARGE SCALE ANALYSIS] AT SER-207</scope>
    <scope>IDENTIFICATION BY MASS SPECTROMETRY [LARGE SCALE ANALYSIS]</scope>
    <source>
        <tissue>Embryonic brain</tissue>
    </source>
</reference>
<reference key="4">
    <citation type="journal article" date="2006" name="Mol. Cell. Proteomics">
        <title>Comprehensive identification of phosphorylation sites in postsynaptic density preparations.</title>
        <authorList>
            <person name="Trinidad J.C."/>
            <person name="Specht C.G."/>
            <person name="Thalhammer A."/>
            <person name="Schoepfer R."/>
            <person name="Burlingame A.L."/>
        </authorList>
    </citation>
    <scope>PHOSPHORYLATION [LARGE SCALE ANALYSIS] AT SER-207 AND SER-405</scope>
    <scope>IDENTIFICATION BY MASS SPECTROMETRY [LARGE SCALE ANALYSIS]</scope>
    <source>
        <tissue>Brain</tissue>
    </source>
</reference>
<reference key="5">
    <citation type="journal article" date="2007" name="Mol. Cell. Proteomics">
        <title>Qualitative and quantitative analyses of protein phosphorylation in naive and stimulated mouse synaptosomal preparations.</title>
        <authorList>
            <person name="Munton R.P."/>
            <person name="Tweedie-Cullen R."/>
            <person name="Livingstone-Zatchej M."/>
            <person name="Weinandy F."/>
            <person name="Waidelich M."/>
            <person name="Longo D."/>
            <person name="Gehrig P."/>
            <person name="Potthast F."/>
            <person name="Rutishauser D."/>
            <person name="Gerrits B."/>
            <person name="Panse C."/>
            <person name="Schlapbach R."/>
            <person name="Mansuy I.M."/>
        </authorList>
    </citation>
    <scope>IDENTIFICATION BY MASS SPECTROMETRY [LARGE SCALE ANALYSIS]</scope>
    <source>
        <tissue>Brain cortex</tissue>
    </source>
</reference>
<reference key="6">
    <citation type="journal article" date="2007" name="Proc. Natl. Acad. Sci. U.S.A.">
        <title>Large-scale phosphorylation analysis of mouse liver.</title>
        <authorList>
            <person name="Villen J."/>
            <person name="Beausoleil S.A."/>
            <person name="Gerber S.A."/>
            <person name="Gygi S.P."/>
        </authorList>
    </citation>
    <scope>PHOSPHORYLATION [LARGE SCALE ANALYSIS] AT SER-207; SER-510; THR-513; THR-515 AND SER-516</scope>
    <scope>IDENTIFICATION BY MASS SPECTROMETRY [LARGE SCALE ANALYSIS]</scope>
    <source>
        <tissue>Liver</tissue>
    </source>
</reference>
<reference key="7">
    <citation type="journal article" date="2009" name="Immunity">
        <title>The phagosomal proteome in interferon-gamma-activated macrophages.</title>
        <authorList>
            <person name="Trost M."/>
            <person name="English L."/>
            <person name="Lemieux S."/>
            <person name="Courcelles M."/>
            <person name="Desjardins M."/>
            <person name="Thibault P."/>
        </authorList>
    </citation>
    <scope>PHOSPHORYLATION [LARGE SCALE ANALYSIS] AT SER-207</scope>
    <scope>IDENTIFICATION BY MASS SPECTROMETRY [LARGE SCALE ANALYSIS]</scope>
</reference>
<reference key="8">
    <citation type="journal article" date="2009" name="Mol. Cell. Proteomics">
        <title>Large scale localization of protein phosphorylation by use of electron capture dissociation mass spectrometry.</title>
        <authorList>
            <person name="Sweet S.M."/>
            <person name="Bailey C.M."/>
            <person name="Cunningham D.L."/>
            <person name="Heath J.K."/>
            <person name="Cooper H.J."/>
        </authorList>
    </citation>
    <scope>PHOSPHORYLATION [LARGE SCALE ANALYSIS] AT SER-516</scope>
    <scope>IDENTIFICATION BY MASS SPECTROMETRY [LARGE SCALE ANALYSIS]</scope>
    <source>
        <tissue>Embryonic fibroblast</tissue>
    </source>
</reference>
<reference key="9">
    <citation type="journal article" date="2010" name="Cell">
        <title>A tissue-specific atlas of mouse protein phosphorylation and expression.</title>
        <authorList>
            <person name="Huttlin E.L."/>
            <person name="Jedrychowski M.P."/>
            <person name="Elias J.E."/>
            <person name="Goswami T."/>
            <person name="Rad R."/>
            <person name="Beausoleil S.A."/>
            <person name="Villen J."/>
            <person name="Haas W."/>
            <person name="Sowa M.E."/>
            <person name="Gygi S.P."/>
        </authorList>
    </citation>
    <scope>PHOSPHORYLATION [LARGE SCALE ANALYSIS] AT SER-207; SER-510; THR-512; THR-513; THR-515 AND SER-516</scope>
    <scope>IDENTIFICATION BY MASS SPECTROMETRY [LARGE SCALE ANALYSIS]</scope>
    <source>
        <tissue>Brain</tissue>
        <tissue>Brown adipose tissue</tissue>
        <tissue>Heart</tissue>
        <tissue>Kidney</tissue>
        <tissue>Liver</tissue>
        <tissue>Lung</tissue>
        <tissue>Pancreas</tissue>
        <tissue>Spleen</tissue>
        <tissue>Testis</tissue>
    </source>
</reference>
<sequence length="523" mass="56614">MAAVGRVGSFGSSPPGLASTYASGPLANELASGSGGPAAGDDEDGQNLWSCILSEVSTRSRSKLPTGKNVLLLGEDGAGKTSLIRRIQGIEEYKKGRGLEYLYLNVHDEDRDDQTRCNVWILDGDLYHKGLLKFSLDALSLRDTLVMLVVDMSKPWTALDSLQKWASVVREHVDKLKIPPEEMKEMEQKLIRDFQEYVEPGEDFPASPQRRTTGAQEDRGDSVVLPLGADTLTHNLGLPVLVVCTKCDAISVLEKEHDYRDEHFDFIQSHIRKFCLQYGAALIYTSVKENKNIDLVYKYIVQKLYGFPYKIPAVVVEKDAVFIPAGWDNDKKIGILHENFQTLKVEDNFEDIITKPPVRKFVHEKEIMAEDDQVFLMKLQSLLAKQPPTAAGRPVDASPRVPGGSPRTPNRSVSSNVASVSPIPAGSKKIDPNMKAGATSEGVLANFFNSLLSKKTGSPGGPGVGGSPGGGAAGASPSLPPSAKKSGQKPVLSDVHAELDRITRKPASVSPTTPTSPTEGEAS</sequence>
<gene>
    <name type="primary">Dync1li1</name>
    <name type="synonym">Dncli1</name>
    <name type="synonym">Dnclic1</name>
</gene>
<organism>
    <name type="scientific">Mus musculus</name>
    <name type="common">Mouse</name>
    <dbReference type="NCBI Taxonomy" id="10090"/>
    <lineage>
        <taxon>Eukaryota</taxon>
        <taxon>Metazoa</taxon>
        <taxon>Chordata</taxon>
        <taxon>Craniata</taxon>
        <taxon>Vertebrata</taxon>
        <taxon>Euteleostomi</taxon>
        <taxon>Mammalia</taxon>
        <taxon>Eutheria</taxon>
        <taxon>Euarchontoglires</taxon>
        <taxon>Glires</taxon>
        <taxon>Rodentia</taxon>
        <taxon>Myomorpha</taxon>
        <taxon>Muroidea</taxon>
        <taxon>Muridae</taxon>
        <taxon>Murinae</taxon>
        <taxon>Mus</taxon>
        <taxon>Mus</taxon>
    </lineage>
</organism>
<proteinExistence type="evidence at protein level"/>
<dbReference type="EMBL" id="BC023347">
    <property type="protein sequence ID" value="AAH23347.1"/>
    <property type="molecule type" value="mRNA"/>
</dbReference>
<dbReference type="CCDS" id="CCDS23595.1"/>
<dbReference type="RefSeq" id="NP_666341.1">
    <property type="nucleotide sequence ID" value="NM_146229.2"/>
</dbReference>
<dbReference type="SMR" id="Q8R1Q8"/>
<dbReference type="BioGRID" id="231702">
    <property type="interactions" value="87"/>
</dbReference>
<dbReference type="FunCoup" id="Q8R1Q8">
    <property type="interactions" value="2913"/>
</dbReference>
<dbReference type="IntAct" id="Q8R1Q8">
    <property type="interactions" value="52"/>
</dbReference>
<dbReference type="MINT" id="Q8R1Q8"/>
<dbReference type="STRING" id="10090.ENSMUSP00000035366"/>
<dbReference type="GlyGen" id="Q8R1Q8">
    <property type="glycosylation" value="1 site, 1 O-linked glycan (1 site)"/>
</dbReference>
<dbReference type="iPTMnet" id="Q8R1Q8"/>
<dbReference type="PhosphoSitePlus" id="Q8R1Q8"/>
<dbReference type="SwissPalm" id="Q8R1Q8"/>
<dbReference type="jPOST" id="Q8R1Q8"/>
<dbReference type="PaxDb" id="10090-ENSMUSP00000035366"/>
<dbReference type="ProteomicsDB" id="279830"/>
<dbReference type="Pumba" id="Q8R1Q8"/>
<dbReference type="Antibodypedia" id="27761">
    <property type="antibodies" value="245 antibodies from 23 providers"/>
</dbReference>
<dbReference type="DNASU" id="235661"/>
<dbReference type="Ensembl" id="ENSMUST00000047404.7">
    <property type="protein sequence ID" value="ENSMUSP00000035366.7"/>
    <property type="gene ID" value="ENSMUSG00000032435.10"/>
</dbReference>
<dbReference type="GeneID" id="235661"/>
<dbReference type="KEGG" id="mmu:235661"/>
<dbReference type="UCSC" id="uc009rxy.1">
    <property type="organism name" value="mouse"/>
</dbReference>
<dbReference type="AGR" id="MGI:2135610"/>
<dbReference type="CTD" id="51143"/>
<dbReference type="MGI" id="MGI:2135610">
    <property type="gene designation" value="Dync1li1"/>
</dbReference>
<dbReference type="VEuPathDB" id="HostDB:ENSMUSG00000032435"/>
<dbReference type="eggNOG" id="KOG3905">
    <property type="taxonomic scope" value="Eukaryota"/>
</dbReference>
<dbReference type="GeneTree" id="ENSGT00390000008295"/>
<dbReference type="HOGENOM" id="CLU_021937_2_1_1"/>
<dbReference type="InParanoid" id="Q8R1Q8"/>
<dbReference type="OMA" id="RCNIWIL"/>
<dbReference type="OrthoDB" id="27603at2759"/>
<dbReference type="PhylomeDB" id="Q8R1Q8"/>
<dbReference type="TreeFam" id="TF352602"/>
<dbReference type="Reactome" id="R-MMU-141444">
    <property type="pathway name" value="Amplification of signal from unattached kinetochores via a MAD2 inhibitory signal"/>
</dbReference>
<dbReference type="Reactome" id="R-MMU-2132295">
    <property type="pathway name" value="MHC class II antigen presentation"/>
</dbReference>
<dbReference type="Reactome" id="R-MMU-2467813">
    <property type="pathway name" value="Separation of Sister Chromatids"/>
</dbReference>
<dbReference type="Reactome" id="R-MMU-2500257">
    <property type="pathway name" value="Resolution of Sister Chromatid Cohesion"/>
</dbReference>
<dbReference type="Reactome" id="R-MMU-3371497">
    <property type="pathway name" value="HSP90 chaperone cycle for steroid hormone receptors (SHR) in the presence of ligand"/>
</dbReference>
<dbReference type="Reactome" id="R-MMU-5663220">
    <property type="pathway name" value="RHO GTPases Activate Formins"/>
</dbReference>
<dbReference type="Reactome" id="R-MMU-6798695">
    <property type="pathway name" value="Neutrophil degranulation"/>
</dbReference>
<dbReference type="Reactome" id="R-MMU-6807878">
    <property type="pathway name" value="COPI-mediated anterograde transport"/>
</dbReference>
<dbReference type="Reactome" id="R-MMU-6811436">
    <property type="pathway name" value="COPI-independent Golgi-to-ER retrograde traffic"/>
</dbReference>
<dbReference type="Reactome" id="R-MMU-68877">
    <property type="pathway name" value="Mitotic Prometaphase"/>
</dbReference>
<dbReference type="Reactome" id="R-MMU-9646399">
    <property type="pathway name" value="Aggrephagy"/>
</dbReference>
<dbReference type="Reactome" id="R-MMU-9648025">
    <property type="pathway name" value="EML4 and NUDC in mitotic spindle formation"/>
</dbReference>
<dbReference type="BioGRID-ORCS" id="235661">
    <property type="hits" value="3 hits in 77 CRISPR screens"/>
</dbReference>
<dbReference type="CD-CODE" id="CE726F99">
    <property type="entry name" value="Postsynaptic density"/>
</dbReference>
<dbReference type="ChiTaRS" id="Dync1li1">
    <property type="organism name" value="mouse"/>
</dbReference>
<dbReference type="PRO" id="PR:Q8R1Q8"/>
<dbReference type="Proteomes" id="UP000000589">
    <property type="component" value="Chromosome 9"/>
</dbReference>
<dbReference type="RNAct" id="Q8R1Q8">
    <property type="molecule type" value="protein"/>
</dbReference>
<dbReference type="Bgee" id="ENSMUSG00000032435">
    <property type="expression patterns" value="Expressed in cortical plate and 234 other cell types or tissues"/>
</dbReference>
<dbReference type="ExpressionAtlas" id="Q8R1Q8">
    <property type="expression patterns" value="baseline and differential"/>
</dbReference>
<dbReference type="GO" id="GO:0005813">
    <property type="term" value="C:centrosome"/>
    <property type="evidence" value="ECO:0007669"/>
    <property type="project" value="Ensembl"/>
</dbReference>
<dbReference type="GO" id="GO:0005868">
    <property type="term" value="C:cytoplasmic dynein complex"/>
    <property type="evidence" value="ECO:0000250"/>
    <property type="project" value="UniProtKB"/>
</dbReference>
<dbReference type="GO" id="GO:0030666">
    <property type="term" value="C:endocytic vesicle membrane"/>
    <property type="evidence" value="ECO:0000250"/>
    <property type="project" value="UniProtKB"/>
</dbReference>
<dbReference type="GO" id="GO:0000776">
    <property type="term" value="C:kinetochore"/>
    <property type="evidence" value="ECO:0000250"/>
    <property type="project" value="UniProtKB"/>
</dbReference>
<dbReference type="GO" id="GO:0005874">
    <property type="term" value="C:microtubule"/>
    <property type="evidence" value="ECO:0007669"/>
    <property type="project" value="UniProtKB-KW"/>
</dbReference>
<dbReference type="GO" id="GO:0055038">
    <property type="term" value="C:recycling endosome membrane"/>
    <property type="evidence" value="ECO:0007669"/>
    <property type="project" value="UniProtKB-SubCell"/>
</dbReference>
<dbReference type="GO" id="GO:0000922">
    <property type="term" value="C:spindle pole"/>
    <property type="evidence" value="ECO:0000250"/>
    <property type="project" value="UniProtKB"/>
</dbReference>
<dbReference type="GO" id="GO:0005524">
    <property type="term" value="F:ATP binding"/>
    <property type="evidence" value="ECO:0007669"/>
    <property type="project" value="UniProtKB-KW"/>
</dbReference>
<dbReference type="GO" id="GO:0045504">
    <property type="term" value="F:dynein heavy chain binding"/>
    <property type="evidence" value="ECO:0007669"/>
    <property type="project" value="Ensembl"/>
</dbReference>
<dbReference type="GO" id="GO:0019003">
    <property type="term" value="F:GDP binding"/>
    <property type="evidence" value="ECO:0007669"/>
    <property type="project" value="Ensembl"/>
</dbReference>
<dbReference type="GO" id="GO:0003777">
    <property type="term" value="F:microtubule motor activity"/>
    <property type="evidence" value="ECO:0000250"/>
    <property type="project" value="MGI"/>
</dbReference>
<dbReference type="GO" id="GO:0030674">
    <property type="term" value="F:protein-macromolecule adaptor activity"/>
    <property type="evidence" value="ECO:0007669"/>
    <property type="project" value="Ensembl"/>
</dbReference>
<dbReference type="GO" id="GO:0051301">
    <property type="term" value="P:cell division"/>
    <property type="evidence" value="ECO:0007669"/>
    <property type="project" value="UniProtKB-KW"/>
</dbReference>
<dbReference type="GO" id="GO:0061502">
    <property type="term" value="P:early endosome to recycling endosome transport"/>
    <property type="evidence" value="ECO:0007669"/>
    <property type="project" value="Ensembl"/>
</dbReference>
<dbReference type="GO" id="GO:0007018">
    <property type="term" value="P:microtubule-based movement"/>
    <property type="evidence" value="ECO:0000250"/>
    <property type="project" value="UniProtKB"/>
</dbReference>
<dbReference type="GO" id="GO:0090267">
    <property type="term" value="P:positive regulation of mitotic cell cycle spindle assembly checkpoint"/>
    <property type="evidence" value="ECO:0000250"/>
    <property type="project" value="UniProtKB"/>
</dbReference>
<dbReference type="GO" id="GO:0060627">
    <property type="term" value="P:regulation of vesicle-mediated transport"/>
    <property type="evidence" value="ECO:0000250"/>
    <property type="project" value="UniProtKB"/>
</dbReference>
<dbReference type="Gene3D" id="3.40.50.300">
    <property type="entry name" value="P-loop containing nucleotide triphosphate hydrolases"/>
    <property type="match status" value="1"/>
</dbReference>
<dbReference type="InterPro" id="IPR008467">
    <property type="entry name" value="Dynein1_light_intermed_chain"/>
</dbReference>
<dbReference type="InterPro" id="IPR022780">
    <property type="entry name" value="Dynein_light_int_chain"/>
</dbReference>
<dbReference type="InterPro" id="IPR027417">
    <property type="entry name" value="P-loop_NTPase"/>
</dbReference>
<dbReference type="PANTHER" id="PTHR12688:SF2">
    <property type="entry name" value="CYTOPLASMIC DYNEIN 1 LIGHT INTERMEDIATE CHAIN 1"/>
    <property type="match status" value="1"/>
</dbReference>
<dbReference type="PANTHER" id="PTHR12688">
    <property type="entry name" value="DYNEIN LIGHT INTERMEDIATE CHAIN"/>
    <property type="match status" value="1"/>
</dbReference>
<dbReference type="Pfam" id="PF05783">
    <property type="entry name" value="DLIC"/>
    <property type="match status" value="1"/>
</dbReference>
<dbReference type="SUPFAM" id="SSF52540">
    <property type="entry name" value="P-loop containing nucleoside triphosphate hydrolases"/>
    <property type="match status" value="1"/>
</dbReference>